<evidence type="ECO:0000250" key="1"/>
<evidence type="ECO:0000269" key="2">
    <source>
    </source>
</evidence>
<evidence type="ECO:0000305" key="3"/>
<gene>
    <name type="primary">acdh-10</name>
    <name type="ORF">T08G2.3</name>
</gene>
<accession>Q22347</accession>
<reference key="1">
    <citation type="journal article" date="1998" name="Science">
        <title>Genome sequence of the nematode C. elegans: a platform for investigating biology.</title>
        <authorList>
            <consortium name="The C. elegans sequencing consortium"/>
        </authorList>
    </citation>
    <scope>NUCLEOTIDE SEQUENCE [LARGE SCALE GENOMIC DNA]</scope>
    <source>
        <strain>Bristol N2</strain>
    </source>
</reference>
<reference key="2">
    <citation type="journal article" date="2008" name="Cell Metab.">
        <title>Serotonin regulates C. elegans fat and feeding through independent molecular mechanisms.</title>
        <authorList>
            <person name="Srinivasan S."/>
            <person name="Sadegh L."/>
            <person name="Elle I.C."/>
            <person name="Christensen A.G."/>
            <person name="Faergeman N.J."/>
            <person name="Ashrafi K."/>
        </authorList>
    </citation>
    <scope>TISSUE SPECIFICITY</scope>
    <scope>INDUCTION</scope>
</reference>
<sequence length="417" mass="44818">MLSRIATSSLGLSRSATGVIATQSRQISFDLSETQKEIQDAALKFSKDVLVPNAAKFDESGEFPWEIVRQAHSLGLMNPQIPEKYGGPGMTTLETALIVEALSYGCTGIQLGIMGPSLAIAPVYISGNEEQKKKYLGALAAEPIIASYCVTEPGAGSDVNGVKTKCEKKGDEYIINGSKAWITGGGHAKWFFVLARSDPNPKTPAGKAFTAFIVDGDTPGITRGKKEKNMGQRCSDTRVITFEDVRVPAENVLGAPGAGFKVAMEAFDMTRPGVAAGALGLSWRCLDESAKYALERKAFGTVIANHQAVQFMLADMAVNLELARLITYKSANDVDNKVRSSYNASIAKCFAADTANQAATNAVQIFGGNGFNSEYPVEKLMRDAKIYQIYEGTSQIQRIVISRMLLGHFAQNGTSRI</sequence>
<comment type="function">
    <text evidence="1">This enzyme is specific for acyl chain lengths of 4 to 16.</text>
</comment>
<comment type="catalytic activity">
    <reaction>
        <text>a medium-chain 2,3-saturated fatty acyl-CoA + oxidized [electron-transfer flavoprotein] + H(+) = a medium-chain (2E)-enoyl-CoA + reduced [electron-transfer flavoprotein]</text>
        <dbReference type="Rhea" id="RHEA:14477"/>
        <dbReference type="Rhea" id="RHEA-COMP:10685"/>
        <dbReference type="Rhea" id="RHEA-COMP:10686"/>
        <dbReference type="ChEBI" id="CHEBI:15378"/>
        <dbReference type="ChEBI" id="CHEBI:57692"/>
        <dbReference type="ChEBI" id="CHEBI:58307"/>
        <dbReference type="ChEBI" id="CHEBI:83723"/>
        <dbReference type="ChEBI" id="CHEBI:83726"/>
        <dbReference type="EC" id="1.3.8.7"/>
    </reaction>
</comment>
<comment type="cofactor">
    <cofactor evidence="1">
        <name>FAD</name>
        <dbReference type="ChEBI" id="CHEBI:57692"/>
    </cofactor>
</comment>
<comment type="pathway">
    <text>Lipid metabolism; mitochondrial fatty acid beta-oxidation.</text>
</comment>
<comment type="subunit">
    <text evidence="1">Homotetramer.</text>
</comment>
<comment type="subcellular location">
    <subcellularLocation>
        <location evidence="1">Mitochondrion matrix</location>
    </subcellularLocation>
</comment>
<comment type="tissue specificity">
    <text evidence="2">Expressed in the epidermis and intestine.</text>
</comment>
<comment type="induction">
    <text evidence="2">By serotonin.</text>
</comment>
<comment type="similarity">
    <text evidence="3">Belongs to the acyl-CoA dehydrogenase family.</text>
</comment>
<feature type="transit peptide" description="Mitochondrion" evidence="1">
    <location>
        <begin position="1"/>
        <end position="15"/>
    </location>
</feature>
<feature type="chain" id="PRO_0000000507" description="Probable medium-chain specific acyl-CoA dehydrogenase 10, mitochondrial">
    <location>
        <begin position="16"/>
        <end position="417"/>
    </location>
</feature>
<feature type="active site" description="Proton acceptor" evidence="1">
    <location>
        <position position="391"/>
    </location>
</feature>
<feature type="binding site" evidence="1">
    <location>
        <begin position="148"/>
        <end position="157"/>
    </location>
    <ligand>
        <name>FAD</name>
        <dbReference type="ChEBI" id="CHEBI:57692"/>
    </ligand>
</feature>
<feature type="binding site" evidence="1">
    <location>
        <position position="157"/>
    </location>
    <ligand>
        <name>substrate</name>
    </ligand>
</feature>
<feature type="binding site" evidence="1">
    <location>
        <begin position="181"/>
        <end position="183"/>
    </location>
    <ligand>
        <name>FAD</name>
        <dbReference type="ChEBI" id="CHEBI:57692"/>
    </ligand>
</feature>
<feature type="binding site" evidence="1">
    <location>
        <begin position="268"/>
        <end position="271"/>
    </location>
    <ligand>
        <name>substrate</name>
    </ligand>
</feature>
<feature type="binding site" evidence="1">
    <location>
        <begin position="306"/>
        <end position="307"/>
    </location>
    <ligand>
        <name>FAD</name>
        <dbReference type="ChEBI" id="CHEBI:57692"/>
    </ligand>
</feature>
<feature type="binding site" evidence="1">
    <location>
        <begin position="364"/>
        <end position="368"/>
    </location>
    <ligand>
        <name>FAD</name>
        <dbReference type="ChEBI" id="CHEBI:57692"/>
    </ligand>
</feature>
<feature type="binding site" evidence="1">
    <location>
        <position position="392"/>
    </location>
    <ligand>
        <name>substrate</name>
    </ligand>
</feature>
<feature type="binding site" evidence="1">
    <location>
        <begin position="393"/>
        <end position="395"/>
    </location>
    <ligand>
        <name>FAD</name>
        <dbReference type="ChEBI" id="CHEBI:57692"/>
    </ligand>
</feature>
<protein>
    <recommendedName>
        <fullName>Probable medium-chain specific acyl-CoA dehydrogenase 10, mitochondrial</fullName>
        <shortName>MCAD</shortName>
        <ecNumber>1.3.8.7</ecNumber>
    </recommendedName>
</protein>
<name>ACADM_CAEEL</name>
<proteinExistence type="evidence at transcript level"/>
<keyword id="KW-0274">FAD</keyword>
<keyword id="KW-0276">Fatty acid metabolism</keyword>
<keyword id="KW-0285">Flavoprotein</keyword>
<keyword id="KW-0443">Lipid metabolism</keyword>
<keyword id="KW-0496">Mitochondrion</keyword>
<keyword id="KW-0560">Oxidoreductase</keyword>
<keyword id="KW-1185">Reference proteome</keyword>
<keyword id="KW-0809">Transit peptide</keyword>
<organism>
    <name type="scientific">Caenorhabditis elegans</name>
    <dbReference type="NCBI Taxonomy" id="6239"/>
    <lineage>
        <taxon>Eukaryota</taxon>
        <taxon>Metazoa</taxon>
        <taxon>Ecdysozoa</taxon>
        <taxon>Nematoda</taxon>
        <taxon>Chromadorea</taxon>
        <taxon>Rhabditida</taxon>
        <taxon>Rhabditina</taxon>
        <taxon>Rhabditomorpha</taxon>
        <taxon>Rhabditoidea</taxon>
        <taxon>Rhabditidae</taxon>
        <taxon>Peloderinae</taxon>
        <taxon>Caenorhabditis</taxon>
    </lineage>
</organism>
<dbReference type="EC" id="1.3.8.7"/>
<dbReference type="EMBL" id="FO080161">
    <property type="protein sequence ID" value="CCD61702.1"/>
    <property type="molecule type" value="Genomic_DNA"/>
</dbReference>
<dbReference type="PIR" id="T16838">
    <property type="entry name" value="T16838"/>
</dbReference>
<dbReference type="RefSeq" id="NP_001294824.1">
    <property type="nucleotide sequence ID" value="NM_001307895.2"/>
</dbReference>
<dbReference type="SMR" id="Q22347"/>
<dbReference type="DIP" id="DIP-25385N"/>
<dbReference type="FunCoup" id="Q22347">
    <property type="interactions" value="775"/>
</dbReference>
<dbReference type="STRING" id="6239.T08G2.3.2"/>
<dbReference type="PaxDb" id="6239-T08G2.3.1"/>
<dbReference type="PeptideAtlas" id="Q22347"/>
<dbReference type="EnsemblMetazoa" id="T08G2.3.1">
    <property type="protein sequence ID" value="T08G2.3.1"/>
    <property type="gene ID" value="WBGene00020366"/>
</dbReference>
<dbReference type="GeneID" id="24104866"/>
<dbReference type="KEGG" id="cel:CELE_T08G2.3"/>
<dbReference type="UCSC" id="T08G2.3.1">
    <property type="organism name" value="c. elegans"/>
</dbReference>
<dbReference type="AGR" id="WB:WBGene00020366"/>
<dbReference type="CTD" id="24104866"/>
<dbReference type="WormBase" id="T08G2.3">
    <property type="protein sequence ID" value="CE07473"/>
    <property type="gene ID" value="WBGene00020366"/>
    <property type="gene designation" value="acdh-10"/>
</dbReference>
<dbReference type="eggNOG" id="KOG0140">
    <property type="taxonomic scope" value="Eukaryota"/>
</dbReference>
<dbReference type="GeneTree" id="ENSGT00970000196345"/>
<dbReference type="HOGENOM" id="CLU_018204_0_2_1"/>
<dbReference type="InParanoid" id="Q22347"/>
<dbReference type="OMA" id="KYDLAEH"/>
<dbReference type="OrthoDB" id="434771at2759"/>
<dbReference type="PhylomeDB" id="Q22347"/>
<dbReference type="UniPathway" id="UPA00660"/>
<dbReference type="PRO" id="PR:Q22347"/>
<dbReference type="Proteomes" id="UP000001940">
    <property type="component" value="Chromosome X"/>
</dbReference>
<dbReference type="Bgee" id="WBGene00020366">
    <property type="expression patterns" value="Expressed in embryo and 4 other cell types or tissues"/>
</dbReference>
<dbReference type="GO" id="GO:0005737">
    <property type="term" value="C:cytoplasm"/>
    <property type="evidence" value="ECO:0000318"/>
    <property type="project" value="GO_Central"/>
</dbReference>
<dbReference type="GO" id="GO:0005759">
    <property type="term" value="C:mitochondrial matrix"/>
    <property type="evidence" value="ECO:0007669"/>
    <property type="project" value="UniProtKB-SubCell"/>
</dbReference>
<dbReference type="GO" id="GO:0005739">
    <property type="term" value="C:mitochondrion"/>
    <property type="evidence" value="ECO:0007005"/>
    <property type="project" value="WormBase"/>
</dbReference>
<dbReference type="GO" id="GO:0050660">
    <property type="term" value="F:flavin adenine dinucleotide binding"/>
    <property type="evidence" value="ECO:0007669"/>
    <property type="project" value="InterPro"/>
</dbReference>
<dbReference type="GO" id="GO:0070991">
    <property type="term" value="F:medium-chain fatty acyl-CoA dehydrogenase activity"/>
    <property type="evidence" value="ECO:0000318"/>
    <property type="project" value="GO_Central"/>
</dbReference>
<dbReference type="GO" id="GO:0006635">
    <property type="term" value="P:fatty acid beta-oxidation"/>
    <property type="evidence" value="ECO:0007669"/>
    <property type="project" value="InterPro"/>
</dbReference>
<dbReference type="GO" id="GO:0051793">
    <property type="term" value="P:medium-chain fatty acid catabolic process"/>
    <property type="evidence" value="ECO:0000318"/>
    <property type="project" value="GO_Central"/>
</dbReference>
<dbReference type="CDD" id="cd01157">
    <property type="entry name" value="MCAD"/>
    <property type="match status" value="1"/>
</dbReference>
<dbReference type="FunFam" id="1.10.540.10:FF:000010">
    <property type="entry name" value="Medium-chain specific acyl-CoA dehydrogenase, mitochondrial"/>
    <property type="match status" value="1"/>
</dbReference>
<dbReference type="FunFam" id="1.20.140.10:FF:000011">
    <property type="entry name" value="Medium-chain specific acyl-CoA dehydrogenase, mitochondrial"/>
    <property type="match status" value="1"/>
</dbReference>
<dbReference type="FunFam" id="2.40.110.10:FF:000007">
    <property type="entry name" value="Medium-chain specific acyl-CoA dehydrogenase, mitochondrial"/>
    <property type="match status" value="1"/>
</dbReference>
<dbReference type="Gene3D" id="1.10.540.10">
    <property type="entry name" value="Acyl-CoA dehydrogenase/oxidase, N-terminal domain"/>
    <property type="match status" value="1"/>
</dbReference>
<dbReference type="Gene3D" id="2.40.110.10">
    <property type="entry name" value="Butyryl-CoA Dehydrogenase, subunit A, domain 2"/>
    <property type="match status" value="1"/>
</dbReference>
<dbReference type="Gene3D" id="1.20.140.10">
    <property type="entry name" value="Butyryl-CoA Dehydrogenase, subunit A, domain 3"/>
    <property type="match status" value="1"/>
</dbReference>
<dbReference type="InterPro" id="IPR006089">
    <property type="entry name" value="Acyl-CoA_DH_CS"/>
</dbReference>
<dbReference type="InterPro" id="IPR006091">
    <property type="entry name" value="Acyl-CoA_Oxase/DH_mid-dom"/>
</dbReference>
<dbReference type="InterPro" id="IPR046373">
    <property type="entry name" value="Acyl-CoA_Oxase/DH_mid-dom_sf"/>
</dbReference>
<dbReference type="InterPro" id="IPR036250">
    <property type="entry name" value="AcylCo_DH-like_C"/>
</dbReference>
<dbReference type="InterPro" id="IPR009075">
    <property type="entry name" value="AcylCo_DH/oxidase_C"/>
</dbReference>
<dbReference type="InterPro" id="IPR013786">
    <property type="entry name" value="AcylCoA_DH/ox_N"/>
</dbReference>
<dbReference type="InterPro" id="IPR037069">
    <property type="entry name" value="AcylCoA_DH/ox_N_sf"/>
</dbReference>
<dbReference type="InterPro" id="IPR009100">
    <property type="entry name" value="AcylCoA_DH/oxidase_NM_dom_sf"/>
</dbReference>
<dbReference type="InterPro" id="IPR034180">
    <property type="entry name" value="MCAD"/>
</dbReference>
<dbReference type="PANTHER" id="PTHR43884">
    <property type="entry name" value="ACYL-COA DEHYDROGENASE"/>
    <property type="match status" value="1"/>
</dbReference>
<dbReference type="PANTHER" id="PTHR43884:SF12">
    <property type="entry name" value="ISOVALERYL-COA DEHYDROGENASE, MITOCHONDRIAL-RELATED"/>
    <property type="match status" value="1"/>
</dbReference>
<dbReference type="Pfam" id="PF00441">
    <property type="entry name" value="Acyl-CoA_dh_1"/>
    <property type="match status" value="1"/>
</dbReference>
<dbReference type="Pfam" id="PF02770">
    <property type="entry name" value="Acyl-CoA_dh_M"/>
    <property type="match status" value="1"/>
</dbReference>
<dbReference type="Pfam" id="PF02771">
    <property type="entry name" value="Acyl-CoA_dh_N"/>
    <property type="match status" value="1"/>
</dbReference>
<dbReference type="PIRSF" id="PIRSF016578">
    <property type="entry name" value="HsaA"/>
    <property type="match status" value="1"/>
</dbReference>
<dbReference type="SUPFAM" id="SSF47203">
    <property type="entry name" value="Acyl-CoA dehydrogenase C-terminal domain-like"/>
    <property type="match status" value="1"/>
</dbReference>
<dbReference type="SUPFAM" id="SSF56645">
    <property type="entry name" value="Acyl-CoA dehydrogenase NM domain-like"/>
    <property type="match status" value="1"/>
</dbReference>
<dbReference type="PROSITE" id="PS00072">
    <property type="entry name" value="ACYL_COA_DH_1"/>
    <property type="match status" value="1"/>
</dbReference>
<dbReference type="PROSITE" id="PS00073">
    <property type="entry name" value="ACYL_COA_DH_2"/>
    <property type="match status" value="1"/>
</dbReference>